<comment type="function">
    <text evidence="1">Thiolesterase that catalyzes the hydrolysis of S-D-lactoyl-glutathione to form glutathione and D-lactic acid.</text>
</comment>
<comment type="catalytic activity">
    <reaction evidence="1">
        <text>an S-(2-hydroxyacyl)glutathione + H2O = a 2-hydroxy carboxylate + glutathione + H(+)</text>
        <dbReference type="Rhea" id="RHEA:21864"/>
        <dbReference type="ChEBI" id="CHEBI:15377"/>
        <dbReference type="ChEBI" id="CHEBI:15378"/>
        <dbReference type="ChEBI" id="CHEBI:57925"/>
        <dbReference type="ChEBI" id="CHEBI:58896"/>
        <dbReference type="ChEBI" id="CHEBI:71261"/>
        <dbReference type="EC" id="3.1.2.6"/>
    </reaction>
</comment>
<comment type="cofactor">
    <cofactor evidence="1">
        <name>Zn(2+)</name>
        <dbReference type="ChEBI" id="CHEBI:29105"/>
    </cofactor>
    <text evidence="1">Binds 2 Zn(2+) ions per subunit.</text>
</comment>
<comment type="pathway">
    <text evidence="1">Secondary metabolite metabolism; methylglyoxal degradation; (R)-lactate from methylglyoxal: step 2/2.</text>
</comment>
<comment type="subunit">
    <text evidence="1">Monomer.</text>
</comment>
<comment type="similarity">
    <text evidence="1">Belongs to the metallo-beta-lactamase superfamily. Glyoxalase II family.</text>
</comment>
<reference key="1">
    <citation type="submission" date="2008-02" db="EMBL/GenBank/DDBJ databases">
        <title>Complete sequence of Escherichia coli C str. ATCC 8739.</title>
        <authorList>
            <person name="Copeland A."/>
            <person name="Lucas S."/>
            <person name="Lapidus A."/>
            <person name="Glavina del Rio T."/>
            <person name="Dalin E."/>
            <person name="Tice H."/>
            <person name="Bruce D."/>
            <person name="Goodwin L."/>
            <person name="Pitluck S."/>
            <person name="Kiss H."/>
            <person name="Brettin T."/>
            <person name="Detter J.C."/>
            <person name="Han C."/>
            <person name="Kuske C.R."/>
            <person name="Schmutz J."/>
            <person name="Larimer F."/>
            <person name="Land M."/>
            <person name="Hauser L."/>
            <person name="Kyrpides N."/>
            <person name="Mikhailova N."/>
            <person name="Ingram L."/>
            <person name="Richardson P."/>
        </authorList>
    </citation>
    <scope>NUCLEOTIDE SEQUENCE [LARGE SCALE GENOMIC DNA]</scope>
    <source>
        <strain>ATCC 8739 / DSM 1576 / NBRC 3972 / NCIMB 8545 / WDCM 00012 / Crooks</strain>
    </source>
</reference>
<proteinExistence type="inferred from homology"/>
<protein>
    <recommendedName>
        <fullName evidence="1">Hydroxyacylglutathione hydrolase</fullName>
        <ecNumber evidence="1">3.1.2.6</ecNumber>
    </recommendedName>
    <alternativeName>
        <fullName evidence="1">Glyoxalase II</fullName>
        <shortName evidence="1">Glx II</shortName>
    </alternativeName>
</protein>
<name>GLO2_ECOLC</name>
<gene>
    <name evidence="1" type="primary">gloB</name>
    <name type="ordered locus">EcolC_3453</name>
</gene>
<keyword id="KW-0378">Hydrolase</keyword>
<keyword id="KW-0479">Metal-binding</keyword>
<keyword id="KW-0862">Zinc</keyword>
<sequence length="251" mass="28462">MNLNSIPAFDDNYIWVLNDEAGRCLIVDPGDAEPVLNAIAANNWQPEAIFLTHHHHDHVGGVKELVEKFPQIVVYGPQETQDKGTTQVVKDGETAFVLGHEFSVIATPGHTLGHICYFSKPYLFCGDTLFSGGCGRLFEGTASQMYQSLKKLSVLPDDTLVCCAHEYTLSNMKFALSILPHDLSINDYYRKVKELRAKNQITLPVILKNERQINVFLRTEDIDLINVINEETLLQQPEERFAWLRSKKDRF</sequence>
<feature type="chain" id="PRO_1000087279" description="Hydroxyacylglutathione hydrolase">
    <location>
        <begin position="1"/>
        <end position="251"/>
    </location>
</feature>
<feature type="binding site" evidence="1">
    <location>
        <position position="53"/>
    </location>
    <ligand>
        <name>Zn(2+)</name>
        <dbReference type="ChEBI" id="CHEBI:29105"/>
        <label>1</label>
    </ligand>
</feature>
<feature type="binding site" evidence="1">
    <location>
        <position position="55"/>
    </location>
    <ligand>
        <name>Zn(2+)</name>
        <dbReference type="ChEBI" id="CHEBI:29105"/>
        <label>1</label>
    </ligand>
</feature>
<feature type="binding site" evidence="1">
    <location>
        <position position="57"/>
    </location>
    <ligand>
        <name>Zn(2+)</name>
        <dbReference type="ChEBI" id="CHEBI:29105"/>
        <label>2</label>
    </ligand>
</feature>
<feature type="binding site" evidence="1">
    <location>
        <position position="58"/>
    </location>
    <ligand>
        <name>Zn(2+)</name>
        <dbReference type="ChEBI" id="CHEBI:29105"/>
        <label>2</label>
    </ligand>
</feature>
<feature type="binding site" evidence="1">
    <location>
        <position position="110"/>
    </location>
    <ligand>
        <name>Zn(2+)</name>
        <dbReference type="ChEBI" id="CHEBI:29105"/>
        <label>1</label>
    </ligand>
</feature>
<feature type="binding site" evidence="1">
    <location>
        <position position="127"/>
    </location>
    <ligand>
        <name>Zn(2+)</name>
        <dbReference type="ChEBI" id="CHEBI:29105"/>
        <label>1</label>
    </ligand>
</feature>
<feature type="binding site" evidence="1">
    <location>
        <position position="127"/>
    </location>
    <ligand>
        <name>Zn(2+)</name>
        <dbReference type="ChEBI" id="CHEBI:29105"/>
        <label>2</label>
    </ligand>
</feature>
<feature type="binding site" evidence="1">
    <location>
        <position position="165"/>
    </location>
    <ligand>
        <name>Zn(2+)</name>
        <dbReference type="ChEBI" id="CHEBI:29105"/>
        <label>2</label>
    </ligand>
</feature>
<accession>B1IPU6</accession>
<dbReference type="EC" id="3.1.2.6" evidence="1"/>
<dbReference type="EMBL" id="CP000946">
    <property type="protein sequence ID" value="ACA79067.1"/>
    <property type="molecule type" value="Genomic_DNA"/>
</dbReference>
<dbReference type="RefSeq" id="WP_001052717.1">
    <property type="nucleotide sequence ID" value="NZ_MTFT01000054.1"/>
</dbReference>
<dbReference type="SMR" id="B1IPU6"/>
<dbReference type="KEGG" id="ecl:EcolC_3453"/>
<dbReference type="HOGENOM" id="CLU_030571_4_1_6"/>
<dbReference type="UniPathway" id="UPA00619">
    <property type="reaction ID" value="UER00676"/>
</dbReference>
<dbReference type="GO" id="GO:0004416">
    <property type="term" value="F:hydroxyacylglutathione hydrolase activity"/>
    <property type="evidence" value="ECO:0007669"/>
    <property type="project" value="UniProtKB-UniRule"/>
</dbReference>
<dbReference type="GO" id="GO:0046872">
    <property type="term" value="F:metal ion binding"/>
    <property type="evidence" value="ECO:0007669"/>
    <property type="project" value="UniProtKB-KW"/>
</dbReference>
<dbReference type="GO" id="GO:0019243">
    <property type="term" value="P:methylglyoxal catabolic process to D-lactate via S-lactoyl-glutathione"/>
    <property type="evidence" value="ECO:0007669"/>
    <property type="project" value="InterPro"/>
</dbReference>
<dbReference type="CDD" id="cd07723">
    <property type="entry name" value="hydroxyacylglutathione_hydrolase_MBL-fold"/>
    <property type="match status" value="1"/>
</dbReference>
<dbReference type="FunFam" id="3.60.15.10:FF:000012">
    <property type="entry name" value="Hydroxyacylglutathione hydrolase"/>
    <property type="match status" value="1"/>
</dbReference>
<dbReference type="Gene3D" id="3.60.15.10">
    <property type="entry name" value="Ribonuclease Z/Hydroxyacylglutathione hydrolase-like"/>
    <property type="match status" value="1"/>
</dbReference>
<dbReference type="HAMAP" id="MF_01374">
    <property type="entry name" value="Glyoxalase_2"/>
    <property type="match status" value="1"/>
</dbReference>
<dbReference type="InterPro" id="IPR035680">
    <property type="entry name" value="Clx_II_MBL"/>
</dbReference>
<dbReference type="InterPro" id="IPR050110">
    <property type="entry name" value="Glyoxalase_II_hydrolase"/>
</dbReference>
<dbReference type="InterPro" id="IPR032282">
    <property type="entry name" value="HAGH_C"/>
</dbReference>
<dbReference type="InterPro" id="IPR017782">
    <property type="entry name" value="Hydroxyacylglutathione_Hdrlase"/>
</dbReference>
<dbReference type="InterPro" id="IPR001279">
    <property type="entry name" value="Metallo-B-lactamas"/>
</dbReference>
<dbReference type="InterPro" id="IPR036866">
    <property type="entry name" value="RibonucZ/Hydroxyglut_hydro"/>
</dbReference>
<dbReference type="NCBIfam" id="TIGR03413">
    <property type="entry name" value="GSH_gloB"/>
    <property type="match status" value="1"/>
</dbReference>
<dbReference type="NCBIfam" id="NF007597">
    <property type="entry name" value="PRK10241.1"/>
    <property type="match status" value="1"/>
</dbReference>
<dbReference type="PANTHER" id="PTHR43705">
    <property type="entry name" value="HYDROXYACYLGLUTATHIONE HYDROLASE"/>
    <property type="match status" value="1"/>
</dbReference>
<dbReference type="PANTHER" id="PTHR43705:SF1">
    <property type="entry name" value="HYDROXYACYLGLUTATHIONE HYDROLASE GLOB"/>
    <property type="match status" value="1"/>
</dbReference>
<dbReference type="Pfam" id="PF16123">
    <property type="entry name" value="HAGH_C"/>
    <property type="match status" value="1"/>
</dbReference>
<dbReference type="Pfam" id="PF00753">
    <property type="entry name" value="Lactamase_B"/>
    <property type="match status" value="1"/>
</dbReference>
<dbReference type="PIRSF" id="PIRSF005457">
    <property type="entry name" value="Glx"/>
    <property type="match status" value="1"/>
</dbReference>
<dbReference type="SMART" id="SM00849">
    <property type="entry name" value="Lactamase_B"/>
    <property type="match status" value="1"/>
</dbReference>
<dbReference type="SUPFAM" id="SSF56281">
    <property type="entry name" value="Metallo-hydrolase/oxidoreductase"/>
    <property type="match status" value="1"/>
</dbReference>
<evidence type="ECO:0000255" key="1">
    <source>
        <dbReference type="HAMAP-Rule" id="MF_01374"/>
    </source>
</evidence>
<organism>
    <name type="scientific">Escherichia coli (strain ATCC 8739 / DSM 1576 / NBRC 3972 / NCIMB 8545 / WDCM 00012 / Crooks)</name>
    <dbReference type="NCBI Taxonomy" id="481805"/>
    <lineage>
        <taxon>Bacteria</taxon>
        <taxon>Pseudomonadati</taxon>
        <taxon>Pseudomonadota</taxon>
        <taxon>Gammaproteobacteria</taxon>
        <taxon>Enterobacterales</taxon>
        <taxon>Enterobacteriaceae</taxon>
        <taxon>Escherichia</taxon>
    </lineage>
</organism>